<reference key="1">
    <citation type="submission" date="2006-10" db="EMBL/GenBank/DDBJ databases">
        <title>Complete sequence of Methanosaeta thermophila PT.</title>
        <authorList>
            <consortium name="US DOE Joint Genome Institute"/>
            <person name="Copeland A."/>
            <person name="Lucas S."/>
            <person name="Lapidus A."/>
            <person name="Barry K."/>
            <person name="Detter J.C."/>
            <person name="Glavina del Rio T."/>
            <person name="Hammon N."/>
            <person name="Israni S."/>
            <person name="Pitluck S."/>
            <person name="Chain P."/>
            <person name="Malfatti S."/>
            <person name="Shin M."/>
            <person name="Vergez L."/>
            <person name="Schmutz J."/>
            <person name="Larimer F."/>
            <person name="Land M."/>
            <person name="Hauser L."/>
            <person name="Kyrpides N."/>
            <person name="Kim E."/>
            <person name="Smith K.S."/>
            <person name="Ingram-Smith C."/>
            <person name="Richardson P."/>
        </authorList>
    </citation>
    <scope>NUCLEOTIDE SEQUENCE [LARGE SCALE GENOMIC DNA]</scope>
    <source>
        <strain>DSM 6194 / JCM 14653 / NBRC 101360 / PT</strain>
    </source>
</reference>
<evidence type="ECO:0000255" key="1">
    <source>
        <dbReference type="HAMAP-Rule" id="MF_00150"/>
    </source>
</evidence>
<feature type="chain" id="PRO_1000011017" description="N-acetyl-gamma-glutamyl-phosphate reductase">
    <location>
        <begin position="1"/>
        <end position="341"/>
    </location>
</feature>
<feature type="active site" evidence="1">
    <location>
        <position position="145"/>
    </location>
</feature>
<comment type="function">
    <text evidence="1">Catalyzes the NADPH-dependent reduction of N-acetyl-5-glutamyl phosphate to yield N-acetyl-L-glutamate 5-semialdehyde.</text>
</comment>
<comment type="catalytic activity">
    <reaction evidence="1">
        <text>N-acetyl-L-glutamate 5-semialdehyde + phosphate + NADP(+) = N-acetyl-L-glutamyl 5-phosphate + NADPH + H(+)</text>
        <dbReference type="Rhea" id="RHEA:21588"/>
        <dbReference type="ChEBI" id="CHEBI:15378"/>
        <dbReference type="ChEBI" id="CHEBI:29123"/>
        <dbReference type="ChEBI" id="CHEBI:43474"/>
        <dbReference type="ChEBI" id="CHEBI:57783"/>
        <dbReference type="ChEBI" id="CHEBI:57936"/>
        <dbReference type="ChEBI" id="CHEBI:58349"/>
        <dbReference type="EC" id="1.2.1.38"/>
    </reaction>
</comment>
<comment type="pathway">
    <text evidence="1">Amino-acid biosynthesis; L-arginine biosynthesis; N(2)-acetyl-L-ornithine from L-glutamate: step 3/4.</text>
</comment>
<comment type="subcellular location">
    <subcellularLocation>
        <location evidence="1">Cytoplasm</location>
    </subcellularLocation>
</comment>
<comment type="similarity">
    <text evidence="1">Belongs to the NAGSA dehydrogenase family. Type 1 subfamily.</text>
</comment>
<accession>A0B6F6</accession>
<proteinExistence type="inferred from homology"/>
<organism>
    <name type="scientific">Methanothrix thermoacetophila (strain DSM 6194 / JCM 14653 / NBRC 101360 / PT)</name>
    <name type="common">Methanosaeta thermophila</name>
    <dbReference type="NCBI Taxonomy" id="349307"/>
    <lineage>
        <taxon>Archaea</taxon>
        <taxon>Methanobacteriati</taxon>
        <taxon>Methanobacteriota</taxon>
        <taxon>Stenosarchaea group</taxon>
        <taxon>Methanomicrobia</taxon>
        <taxon>Methanotrichales</taxon>
        <taxon>Methanotrichaceae</taxon>
        <taxon>Methanothrix</taxon>
    </lineage>
</organism>
<protein>
    <recommendedName>
        <fullName evidence="1">N-acetyl-gamma-glutamyl-phosphate reductase</fullName>
        <shortName evidence="1">AGPR</shortName>
        <ecNumber evidence="1">1.2.1.38</ecNumber>
    </recommendedName>
    <alternativeName>
        <fullName evidence="1">N-acetyl-glutamate semialdehyde dehydrogenase</fullName>
        <shortName evidence="1">NAGSA dehydrogenase</shortName>
    </alternativeName>
</protein>
<name>ARGC_METTP</name>
<sequence>MIDIGIVGGSGYTGGELLRLLSVHPSANVVCVTSRKLAGKPVTSVHQHLRGLLDLRFEAPSPAEIAQRCDVVFTAVPHGTAMDWVPELLDNGAKVIDLSADYRLPVDVFEKTYGIKHRAPRDAVFGLPELHPEVAGASLVGNPGCYPTGATLAIAPLAKAGMVDRVVFDSKSGISGAGAEPTETSHYPNLAENIRCYRVTNHRHVPEIKQELSRLQNDIRISFTPHVIPAVRGILTTAHVFVKDSFQDTIQDREFISKLYSDFYRNAKFVRLVEGVPMLGNVRCSNFCDIGFEIEKNSDRIVVISAIDNLVKGASGQAIQNMNLMMGLDETAGLWFPGGAP</sequence>
<dbReference type="EC" id="1.2.1.38" evidence="1"/>
<dbReference type="EMBL" id="CP000477">
    <property type="protein sequence ID" value="ABK14280.1"/>
    <property type="molecule type" value="Genomic_DNA"/>
</dbReference>
<dbReference type="RefSeq" id="WP_011695678.1">
    <property type="nucleotide sequence ID" value="NC_008553.1"/>
</dbReference>
<dbReference type="SMR" id="A0B6F6"/>
<dbReference type="STRING" id="349307.Mthe_0489"/>
<dbReference type="GeneID" id="4463236"/>
<dbReference type="KEGG" id="mtp:Mthe_0489"/>
<dbReference type="HOGENOM" id="CLU_006384_0_1_2"/>
<dbReference type="OrthoDB" id="372053at2157"/>
<dbReference type="UniPathway" id="UPA00068">
    <property type="reaction ID" value="UER00108"/>
</dbReference>
<dbReference type="Proteomes" id="UP000000674">
    <property type="component" value="Chromosome"/>
</dbReference>
<dbReference type="GO" id="GO:0005737">
    <property type="term" value="C:cytoplasm"/>
    <property type="evidence" value="ECO:0007669"/>
    <property type="project" value="UniProtKB-SubCell"/>
</dbReference>
<dbReference type="GO" id="GO:0003942">
    <property type="term" value="F:N-acetyl-gamma-glutamyl-phosphate reductase activity"/>
    <property type="evidence" value="ECO:0007669"/>
    <property type="project" value="UniProtKB-UniRule"/>
</dbReference>
<dbReference type="GO" id="GO:0051287">
    <property type="term" value="F:NAD binding"/>
    <property type="evidence" value="ECO:0007669"/>
    <property type="project" value="InterPro"/>
</dbReference>
<dbReference type="GO" id="GO:0070401">
    <property type="term" value="F:NADP+ binding"/>
    <property type="evidence" value="ECO:0007669"/>
    <property type="project" value="InterPro"/>
</dbReference>
<dbReference type="GO" id="GO:0006526">
    <property type="term" value="P:L-arginine biosynthetic process"/>
    <property type="evidence" value="ECO:0007669"/>
    <property type="project" value="UniProtKB-UniRule"/>
</dbReference>
<dbReference type="CDD" id="cd23934">
    <property type="entry name" value="AGPR_1_C"/>
    <property type="match status" value="1"/>
</dbReference>
<dbReference type="CDD" id="cd17895">
    <property type="entry name" value="AGPR_1_N"/>
    <property type="match status" value="1"/>
</dbReference>
<dbReference type="FunFam" id="3.30.360.10:FF:000014">
    <property type="entry name" value="N-acetyl-gamma-glutamyl-phosphate reductase"/>
    <property type="match status" value="1"/>
</dbReference>
<dbReference type="Gene3D" id="3.30.360.10">
    <property type="entry name" value="Dihydrodipicolinate Reductase, domain 2"/>
    <property type="match status" value="1"/>
</dbReference>
<dbReference type="Gene3D" id="3.40.50.720">
    <property type="entry name" value="NAD(P)-binding Rossmann-like Domain"/>
    <property type="match status" value="1"/>
</dbReference>
<dbReference type="HAMAP" id="MF_00150">
    <property type="entry name" value="ArgC_type1"/>
    <property type="match status" value="1"/>
</dbReference>
<dbReference type="InterPro" id="IPR023013">
    <property type="entry name" value="AGPR_AS"/>
</dbReference>
<dbReference type="InterPro" id="IPR000706">
    <property type="entry name" value="AGPR_type-1"/>
</dbReference>
<dbReference type="InterPro" id="IPR036291">
    <property type="entry name" value="NAD(P)-bd_dom_sf"/>
</dbReference>
<dbReference type="InterPro" id="IPR050085">
    <property type="entry name" value="NAGSA_dehydrogenase"/>
</dbReference>
<dbReference type="InterPro" id="IPR000534">
    <property type="entry name" value="Semialdehyde_DH_NAD-bd"/>
</dbReference>
<dbReference type="NCBIfam" id="TIGR01850">
    <property type="entry name" value="argC"/>
    <property type="match status" value="1"/>
</dbReference>
<dbReference type="PANTHER" id="PTHR32338:SF10">
    <property type="entry name" value="N-ACETYL-GAMMA-GLUTAMYL-PHOSPHATE REDUCTASE, CHLOROPLASTIC-RELATED"/>
    <property type="match status" value="1"/>
</dbReference>
<dbReference type="PANTHER" id="PTHR32338">
    <property type="entry name" value="N-ACETYL-GAMMA-GLUTAMYL-PHOSPHATE REDUCTASE, CHLOROPLASTIC-RELATED-RELATED"/>
    <property type="match status" value="1"/>
</dbReference>
<dbReference type="Pfam" id="PF01118">
    <property type="entry name" value="Semialdhyde_dh"/>
    <property type="match status" value="1"/>
</dbReference>
<dbReference type="Pfam" id="PF22698">
    <property type="entry name" value="Semialdhyde_dhC_1"/>
    <property type="match status" value="1"/>
</dbReference>
<dbReference type="SMART" id="SM00859">
    <property type="entry name" value="Semialdhyde_dh"/>
    <property type="match status" value="1"/>
</dbReference>
<dbReference type="SUPFAM" id="SSF55347">
    <property type="entry name" value="Glyceraldehyde-3-phosphate dehydrogenase-like, C-terminal domain"/>
    <property type="match status" value="1"/>
</dbReference>
<dbReference type="SUPFAM" id="SSF51735">
    <property type="entry name" value="NAD(P)-binding Rossmann-fold domains"/>
    <property type="match status" value="1"/>
</dbReference>
<dbReference type="PROSITE" id="PS01224">
    <property type="entry name" value="ARGC"/>
    <property type="match status" value="1"/>
</dbReference>
<gene>
    <name evidence="1" type="primary">argC</name>
    <name type="ordered locus">Mthe_0489</name>
</gene>
<keyword id="KW-0028">Amino-acid biosynthesis</keyword>
<keyword id="KW-0055">Arginine biosynthesis</keyword>
<keyword id="KW-0963">Cytoplasm</keyword>
<keyword id="KW-0521">NADP</keyword>
<keyword id="KW-0560">Oxidoreductase</keyword>
<keyword id="KW-1185">Reference proteome</keyword>